<comment type="function">
    <text evidence="1">Could be involved in septation.</text>
</comment>
<comment type="similarity">
    <text evidence="1">Belongs to the SpoVG family.</text>
</comment>
<proteinExistence type="inferred from homology"/>
<name>SP5G_MYXXD</name>
<keyword id="KW-0131">Cell cycle</keyword>
<keyword id="KW-0132">Cell division</keyword>
<keyword id="KW-1185">Reference proteome</keyword>
<keyword id="KW-0717">Septation</keyword>
<sequence>MNITDVRVFPVEEDKLKAYVTITLDHCFVIRDLKVIHGSTGLFIAMPAKKRKDGTYKDIAHPLNADTRSQMERVILMEYERHLHQAQAGMLVAAPADLD</sequence>
<accession>Q1D295</accession>
<dbReference type="EMBL" id="CP000113">
    <property type="protein sequence ID" value="ABF86940.1"/>
    <property type="molecule type" value="Genomic_DNA"/>
</dbReference>
<dbReference type="RefSeq" id="WP_002634160.1">
    <property type="nucleotide sequence ID" value="NC_008095.1"/>
</dbReference>
<dbReference type="SMR" id="Q1D295"/>
<dbReference type="STRING" id="246197.MXAN_5074"/>
<dbReference type="EnsemblBacteria" id="ABF86940">
    <property type="protein sequence ID" value="ABF86940"/>
    <property type="gene ID" value="MXAN_5074"/>
</dbReference>
<dbReference type="GeneID" id="41362358"/>
<dbReference type="KEGG" id="mxa:MXAN_5074"/>
<dbReference type="eggNOG" id="COG2088">
    <property type="taxonomic scope" value="Bacteria"/>
</dbReference>
<dbReference type="HOGENOM" id="CLU_103669_2_1_7"/>
<dbReference type="OrthoDB" id="9796286at2"/>
<dbReference type="Proteomes" id="UP000002402">
    <property type="component" value="Chromosome"/>
</dbReference>
<dbReference type="GO" id="GO:0000917">
    <property type="term" value="P:division septum assembly"/>
    <property type="evidence" value="ECO:0007669"/>
    <property type="project" value="UniProtKB-KW"/>
</dbReference>
<dbReference type="GO" id="GO:0030435">
    <property type="term" value="P:sporulation resulting in formation of a cellular spore"/>
    <property type="evidence" value="ECO:0007669"/>
    <property type="project" value="InterPro"/>
</dbReference>
<dbReference type="Gene3D" id="3.30.1120.40">
    <property type="entry name" value="Stage V sporulation protein G"/>
    <property type="match status" value="1"/>
</dbReference>
<dbReference type="HAMAP" id="MF_00819">
    <property type="entry name" value="SpoVG"/>
    <property type="match status" value="1"/>
</dbReference>
<dbReference type="InterPro" id="IPR007170">
    <property type="entry name" value="SpoVG"/>
</dbReference>
<dbReference type="InterPro" id="IPR036751">
    <property type="entry name" value="SpoVG_sf"/>
</dbReference>
<dbReference type="NCBIfam" id="NF009749">
    <property type="entry name" value="PRK13259.1"/>
    <property type="match status" value="1"/>
</dbReference>
<dbReference type="PANTHER" id="PTHR38429">
    <property type="entry name" value="SEPTATION PROTEIN SPOVG-RELATED"/>
    <property type="match status" value="1"/>
</dbReference>
<dbReference type="PANTHER" id="PTHR38429:SF1">
    <property type="entry name" value="SEPTATION PROTEIN SPOVG-RELATED"/>
    <property type="match status" value="1"/>
</dbReference>
<dbReference type="Pfam" id="PF04026">
    <property type="entry name" value="SpoVG"/>
    <property type="match status" value="1"/>
</dbReference>
<dbReference type="SUPFAM" id="SSF160537">
    <property type="entry name" value="SpoVG-like"/>
    <property type="match status" value="1"/>
</dbReference>
<reference key="1">
    <citation type="journal article" date="2006" name="Proc. Natl. Acad. Sci. U.S.A.">
        <title>Evolution of sensory complexity recorded in a myxobacterial genome.</title>
        <authorList>
            <person name="Goldman B.S."/>
            <person name="Nierman W.C."/>
            <person name="Kaiser D."/>
            <person name="Slater S.C."/>
            <person name="Durkin A.S."/>
            <person name="Eisen J.A."/>
            <person name="Ronning C.M."/>
            <person name="Barbazuk W.B."/>
            <person name="Blanchard M."/>
            <person name="Field C."/>
            <person name="Halling C."/>
            <person name="Hinkle G."/>
            <person name="Iartchuk O."/>
            <person name="Kim H.S."/>
            <person name="Mackenzie C."/>
            <person name="Madupu R."/>
            <person name="Miller N."/>
            <person name="Shvartsbeyn A."/>
            <person name="Sullivan S.A."/>
            <person name="Vaudin M."/>
            <person name="Wiegand R."/>
            <person name="Kaplan H.B."/>
        </authorList>
    </citation>
    <scope>NUCLEOTIDE SEQUENCE [LARGE SCALE GENOMIC DNA]</scope>
    <source>
        <strain>DK1622</strain>
    </source>
</reference>
<organism>
    <name type="scientific">Myxococcus xanthus (strain DK1622)</name>
    <dbReference type="NCBI Taxonomy" id="246197"/>
    <lineage>
        <taxon>Bacteria</taxon>
        <taxon>Pseudomonadati</taxon>
        <taxon>Myxococcota</taxon>
        <taxon>Myxococcia</taxon>
        <taxon>Myxococcales</taxon>
        <taxon>Cystobacterineae</taxon>
        <taxon>Myxococcaceae</taxon>
        <taxon>Myxococcus</taxon>
    </lineage>
</organism>
<gene>
    <name evidence="1" type="primary">spoVG</name>
    <name type="ordered locus">MXAN_5074</name>
</gene>
<protein>
    <recommendedName>
        <fullName evidence="1">Putative septation protein SpoVG</fullName>
    </recommendedName>
</protein>
<feature type="chain" id="PRO_1000062434" description="Putative septation protein SpoVG">
    <location>
        <begin position="1"/>
        <end position="99"/>
    </location>
</feature>
<evidence type="ECO:0000255" key="1">
    <source>
        <dbReference type="HAMAP-Rule" id="MF_00819"/>
    </source>
</evidence>